<gene>
    <name type="ORF">PHYPADRAFT_134384</name>
</gene>
<accession>A9SS00</accession>
<proteinExistence type="inferred from homology"/>
<protein>
    <recommendedName>
        <fullName evidence="1">Acireductone dioxygenase 2</fullName>
    </recommendedName>
    <alternativeName>
        <fullName evidence="1">Acireductone dioxygenase (Fe(2+)-requiring) 2</fullName>
        <shortName evidence="1">ARD' 2</shortName>
        <shortName evidence="1">Fe-ARD 2</shortName>
        <ecNumber evidence="1">1.13.11.54</ecNumber>
    </alternativeName>
    <alternativeName>
        <fullName evidence="1">Acireductone dioxygenase (Ni(2+)-requiring) 2</fullName>
        <shortName evidence="1">ARD 2</shortName>
        <shortName evidence="1">Ni-ARD 2</shortName>
        <ecNumber evidence="1">1.13.11.53</ecNumber>
    </alternativeName>
</protein>
<keyword id="KW-0028">Amino-acid biosynthesis</keyword>
<keyword id="KW-0963">Cytoplasm</keyword>
<keyword id="KW-0223">Dioxygenase</keyword>
<keyword id="KW-0408">Iron</keyword>
<keyword id="KW-0479">Metal-binding</keyword>
<keyword id="KW-0486">Methionine biosynthesis</keyword>
<keyword id="KW-0533">Nickel</keyword>
<keyword id="KW-0539">Nucleus</keyword>
<keyword id="KW-0560">Oxidoreductase</keyword>
<keyword id="KW-1185">Reference proteome</keyword>
<sequence>MQVQRPPLEAWYMNDSEEDQRLPHHRNPPEYVTLEKLAALGVIHWVLDADNHETDPELSIIRKDRGYNYTDVITVCPEMLPSYEAKIKSFYEEHIHMDEEIRYCLDGSGYFDVRDPEDHWIRIWVRKGDMIVLPAGCYHRFTLDEHNYIMAMRLFVGEPIWTPYNRPQDEHPVRKGYVHQFLQPELLDVDMSISA</sequence>
<evidence type="ECO:0000255" key="1">
    <source>
        <dbReference type="HAMAP-Rule" id="MF_03154"/>
    </source>
</evidence>
<name>MTND2_PHYPA</name>
<reference key="1">
    <citation type="journal article" date="2008" name="Science">
        <title>The Physcomitrella genome reveals evolutionary insights into the conquest of land by plants.</title>
        <authorList>
            <person name="Rensing S.A."/>
            <person name="Lang D."/>
            <person name="Zimmer A.D."/>
            <person name="Terry A."/>
            <person name="Salamov A."/>
            <person name="Shapiro H."/>
            <person name="Nishiyama T."/>
            <person name="Perroud P.-F."/>
            <person name="Lindquist E.A."/>
            <person name="Kamisugi Y."/>
            <person name="Tanahashi T."/>
            <person name="Sakakibara K."/>
            <person name="Fujita T."/>
            <person name="Oishi K."/>
            <person name="Shin-I T."/>
            <person name="Kuroki Y."/>
            <person name="Toyoda A."/>
            <person name="Suzuki Y."/>
            <person name="Hashimoto S.-I."/>
            <person name="Yamaguchi K."/>
            <person name="Sugano S."/>
            <person name="Kohara Y."/>
            <person name="Fujiyama A."/>
            <person name="Anterola A."/>
            <person name="Aoki S."/>
            <person name="Ashton N."/>
            <person name="Barbazuk W.B."/>
            <person name="Barker E."/>
            <person name="Bennetzen J.L."/>
            <person name="Blankenship R."/>
            <person name="Cho S.H."/>
            <person name="Dutcher S.K."/>
            <person name="Estelle M."/>
            <person name="Fawcett J.A."/>
            <person name="Gundlach H."/>
            <person name="Hanada K."/>
            <person name="Heyl A."/>
            <person name="Hicks K.A."/>
            <person name="Hughes J."/>
            <person name="Lohr M."/>
            <person name="Mayer K."/>
            <person name="Melkozernov A."/>
            <person name="Murata T."/>
            <person name="Nelson D.R."/>
            <person name="Pils B."/>
            <person name="Prigge M."/>
            <person name="Reiss B."/>
            <person name="Renner T."/>
            <person name="Rombauts S."/>
            <person name="Rushton P.J."/>
            <person name="Sanderfoot A."/>
            <person name="Schween G."/>
            <person name="Shiu S.-H."/>
            <person name="Stueber K."/>
            <person name="Theodoulou F.L."/>
            <person name="Tu H."/>
            <person name="Van de Peer Y."/>
            <person name="Verrier P.J."/>
            <person name="Waters E."/>
            <person name="Wood A."/>
            <person name="Yang L."/>
            <person name="Cove D."/>
            <person name="Cuming A.C."/>
            <person name="Hasebe M."/>
            <person name="Lucas S."/>
            <person name="Mishler B.D."/>
            <person name="Reski R."/>
            <person name="Grigoriev I.V."/>
            <person name="Quatrano R.S."/>
            <person name="Boore J.L."/>
        </authorList>
    </citation>
    <scope>NUCLEOTIDE SEQUENCE [LARGE SCALE GENOMIC DNA]</scope>
    <source>
        <strain>cv. Gransden 2004</strain>
    </source>
</reference>
<organism>
    <name type="scientific">Physcomitrium patens</name>
    <name type="common">Spreading-leaved earth moss</name>
    <name type="synonym">Physcomitrella patens</name>
    <dbReference type="NCBI Taxonomy" id="3218"/>
    <lineage>
        <taxon>Eukaryota</taxon>
        <taxon>Viridiplantae</taxon>
        <taxon>Streptophyta</taxon>
        <taxon>Embryophyta</taxon>
        <taxon>Bryophyta</taxon>
        <taxon>Bryophytina</taxon>
        <taxon>Bryopsida</taxon>
        <taxon>Funariidae</taxon>
        <taxon>Funariales</taxon>
        <taxon>Funariaceae</taxon>
        <taxon>Physcomitrium</taxon>
    </lineage>
</organism>
<dbReference type="EC" id="1.13.11.54" evidence="1"/>
<dbReference type="EC" id="1.13.11.53" evidence="1"/>
<dbReference type="EMBL" id="DS545000">
    <property type="protein sequence ID" value="EDQ66042.1"/>
    <property type="molecule type" value="Genomic_DNA"/>
</dbReference>
<dbReference type="RefSeq" id="XP_001769170.1">
    <property type="nucleotide sequence ID" value="XM_001769118.1"/>
</dbReference>
<dbReference type="FunCoup" id="A9SS00">
    <property type="interactions" value="3432"/>
</dbReference>
<dbReference type="PaxDb" id="3218-PP1S111_19V6.1"/>
<dbReference type="eggNOG" id="KOG2107">
    <property type="taxonomic scope" value="Eukaryota"/>
</dbReference>
<dbReference type="HOGENOM" id="CLU_090154_0_1_1"/>
<dbReference type="InParanoid" id="A9SS00"/>
<dbReference type="UniPathway" id="UPA00904">
    <property type="reaction ID" value="UER00878"/>
</dbReference>
<dbReference type="Proteomes" id="UP000006727">
    <property type="component" value="Unplaced"/>
</dbReference>
<dbReference type="GO" id="GO:0005737">
    <property type="term" value="C:cytoplasm"/>
    <property type="evidence" value="ECO:0007669"/>
    <property type="project" value="UniProtKB-SubCell"/>
</dbReference>
<dbReference type="GO" id="GO:0005634">
    <property type="term" value="C:nucleus"/>
    <property type="evidence" value="ECO:0007669"/>
    <property type="project" value="UniProtKB-SubCell"/>
</dbReference>
<dbReference type="GO" id="GO:0010308">
    <property type="term" value="F:acireductone dioxygenase (Ni2+-requiring) activity"/>
    <property type="evidence" value="ECO:0007669"/>
    <property type="project" value="UniProtKB-UniRule"/>
</dbReference>
<dbReference type="GO" id="GO:0010309">
    <property type="term" value="F:acireductone dioxygenase [iron(II)-requiring] activity"/>
    <property type="evidence" value="ECO:0000318"/>
    <property type="project" value="GO_Central"/>
</dbReference>
<dbReference type="GO" id="GO:0005506">
    <property type="term" value="F:iron ion binding"/>
    <property type="evidence" value="ECO:0007669"/>
    <property type="project" value="UniProtKB-UniRule"/>
</dbReference>
<dbReference type="GO" id="GO:0016151">
    <property type="term" value="F:nickel cation binding"/>
    <property type="evidence" value="ECO:0007669"/>
    <property type="project" value="UniProtKB-UniRule"/>
</dbReference>
<dbReference type="GO" id="GO:0019509">
    <property type="term" value="P:L-methionine salvage from methylthioadenosine"/>
    <property type="evidence" value="ECO:0007669"/>
    <property type="project" value="UniProtKB-UniRule"/>
</dbReference>
<dbReference type="GO" id="GO:0006555">
    <property type="term" value="P:methionine metabolic process"/>
    <property type="evidence" value="ECO:0000318"/>
    <property type="project" value="GO_Central"/>
</dbReference>
<dbReference type="CDD" id="cd02232">
    <property type="entry name" value="cupin_ARD"/>
    <property type="match status" value="1"/>
</dbReference>
<dbReference type="FunFam" id="2.60.120.10:FF:000031">
    <property type="entry name" value="1,2-dihydroxy-3-keto-5-methylthiopentene dioxygenase"/>
    <property type="match status" value="1"/>
</dbReference>
<dbReference type="Gene3D" id="2.60.120.10">
    <property type="entry name" value="Jelly Rolls"/>
    <property type="match status" value="1"/>
</dbReference>
<dbReference type="HAMAP" id="MF_03154">
    <property type="entry name" value="Salvage_MtnD_euk"/>
    <property type="match status" value="1"/>
</dbReference>
<dbReference type="InterPro" id="IPR004313">
    <property type="entry name" value="ARD"/>
</dbReference>
<dbReference type="InterPro" id="IPR027496">
    <property type="entry name" value="ARD_euk"/>
</dbReference>
<dbReference type="InterPro" id="IPR014710">
    <property type="entry name" value="RmlC-like_jellyroll"/>
</dbReference>
<dbReference type="InterPro" id="IPR011051">
    <property type="entry name" value="RmlC_Cupin_sf"/>
</dbReference>
<dbReference type="PANTHER" id="PTHR23418">
    <property type="entry name" value="ACIREDUCTONE DIOXYGENASE"/>
    <property type="match status" value="1"/>
</dbReference>
<dbReference type="PANTHER" id="PTHR23418:SF0">
    <property type="entry name" value="ACIREDUCTONE DIOXYGENASE"/>
    <property type="match status" value="1"/>
</dbReference>
<dbReference type="Pfam" id="PF03079">
    <property type="entry name" value="ARD"/>
    <property type="match status" value="1"/>
</dbReference>
<dbReference type="SUPFAM" id="SSF51182">
    <property type="entry name" value="RmlC-like cupins"/>
    <property type="match status" value="1"/>
</dbReference>
<feature type="chain" id="PRO_0000414343" description="Acireductone dioxygenase 2">
    <location>
        <begin position="1"/>
        <end position="195"/>
    </location>
</feature>
<feature type="binding site" evidence="1">
    <location>
        <position position="94"/>
    </location>
    <ligand>
        <name>Fe(2+)</name>
        <dbReference type="ChEBI" id="CHEBI:29033"/>
        <note>for iron-dependent acireductone dioxygenase activity</note>
    </ligand>
</feature>
<feature type="binding site" evidence="1">
    <location>
        <position position="94"/>
    </location>
    <ligand>
        <name>Ni(2+)</name>
        <dbReference type="ChEBI" id="CHEBI:49786"/>
        <note>for nickel-dependent acireductone dioxygenase activity</note>
    </ligand>
</feature>
<feature type="binding site" evidence="1">
    <location>
        <position position="96"/>
    </location>
    <ligand>
        <name>Fe(2+)</name>
        <dbReference type="ChEBI" id="CHEBI:29033"/>
        <note>for iron-dependent acireductone dioxygenase activity</note>
    </ligand>
</feature>
<feature type="binding site" evidence="1">
    <location>
        <position position="96"/>
    </location>
    <ligand>
        <name>Ni(2+)</name>
        <dbReference type="ChEBI" id="CHEBI:49786"/>
        <note>for nickel-dependent acireductone dioxygenase activity</note>
    </ligand>
</feature>
<feature type="binding site" evidence="1">
    <location>
        <position position="100"/>
    </location>
    <ligand>
        <name>Fe(2+)</name>
        <dbReference type="ChEBI" id="CHEBI:29033"/>
        <note>for iron-dependent acireductone dioxygenase activity</note>
    </ligand>
</feature>
<feature type="binding site" evidence="1">
    <location>
        <position position="100"/>
    </location>
    <ligand>
        <name>Ni(2+)</name>
        <dbReference type="ChEBI" id="CHEBI:49786"/>
        <note>for nickel-dependent acireductone dioxygenase activity</note>
    </ligand>
</feature>
<feature type="binding site" evidence="1">
    <location>
        <position position="139"/>
    </location>
    <ligand>
        <name>Fe(2+)</name>
        <dbReference type="ChEBI" id="CHEBI:29033"/>
        <note>for iron-dependent acireductone dioxygenase activity</note>
    </ligand>
</feature>
<feature type="binding site" evidence="1">
    <location>
        <position position="139"/>
    </location>
    <ligand>
        <name>Ni(2+)</name>
        <dbReference type="ChEBI" id="CHEBI:49786"/>
        <note>for nickel-dependent acireductone dioxygenase activity</note>
    </ligand>
</feature>
<comment type="function">
    <text evidence="1">Catalyzes 2 different reactions between oxygen and the acireductone 1,2-dihydroxy-3-keto-5-methylthiopentene (DHK-MTPene) depending upon the metal bound in the active site. Fe-containing acireductone dioxygenase (Fe-ARD) produces formate and 2-keto-4-methylthiobutyrate (KMTB), the alpha-ketoacid precursor of methionine in the methionine recycle pathway. Ni-containing acireductone dioxygenase (Ni-ARD) produces methylthiopropionate, carbon monoxide and formate, and does not lie on the methionine recycle pathway.</text>
</comment>
<comment type="catalytic activity">
    <reaction evidence="1">
        <text>1,2-dihydroxy-5-(methylsulfanyl)pent-1-en-3-one + O2 = 4-methylsulfanyl-2-oxobutanoate + formate + 2 H(+)</text>
        <dbReference type="Rhea" id="RHEA:24504"/>
        <dbReference type="ChEBI" id="CHEBI:15378"/>
        <dbReference type="ChEBI" id="CHEBI:15379"/>
        <dbReference type="ChEBI" id="CHEBI:15740"/>
        <dbReference type="ChEBI" id="CHEBI:16723"/>
        <dbReference type="ChEBI" id="CHEBI:49252"/>
        <dbReference type="EC" id="1.13.11.54"/>
    </reaction>
</comment>
<comment type="catalytic activity">
    <reaction evidence="1">
        <text>1,2-dihydroxy-5-(methylsulfanyl)pent-1-en-3-one + O2 = 3-(methylsulfanyl)propanoate + CO + formate + 2 H(+)</text>
        <dbReference type="Rhea" id="RHEA:14161"/>
        <dbReference type="ChEBI" id="CHEBI:15378"/>
        <dbReference type="ChEBI" id="CHEBI:15379"/>
        <dbReference type="ChEBI" id="CHEBI:15740"/>
        <dbReference type="ChEBI" id="CHEBI:17245"/>
        <dbReference type="ChEBI" id="CHEBI:49016"/>
        <dbReference type="ChEBI" id="CHEBI:49252"/>
        <dbReference type="EC" id="1.13.11.53"/>
    </reaction>
</comment>
<comment type="cofactor">
    <cofactor evidence="1">
        <name>Fe(2+)</name>
        <dbReference type="ChEBI" id="CHEBI:29033"/>
    </cofactor>
    <cofactor evidence="1">
        <name>Ni(2+)</name>
        <dbReference type="ChEBI" id="CHEBI:49786"/>
    </cofactor>
    <text evidence="1">Binds either 1 Fe or Ni cation per monomer. Iron-binding promotes an acireductone dioxygenase reaction producing 2-keto-4-methylthiobutyrate, while nickel-binding promotes an acireductone dioxygenase reaction producing 3-(methylsulfanyl)propanoate.</text>
</comment>
<comment type="pathway">
    <text evidence="1">Amino-acid biosynthesis; L-methionine biosynthesis via salvage pathway; L-methionine from S-methyl-5-thio-alpha-D-ribose 1-phosphate: step 5/6.</text>
</comment>
<comment type="subcellular location">
    <subcellularLocation>
        <location evidence="1">Cytoplasm</location>
    </subcellularLocation>
    <subcellularLocation>
        <location evidence="1">Nucleus</location>
    </subcellularLocation>
</comment>
<comment type="similarity">
    <text evidence="1">Belongs to the acireductone dioxygenase (ARD) family.</text>
</comment>